<protein>
    <recommendedName>
        <fullName evidence="1">Eukaryotic translation initiation factor 3 subunit E</fullName>
        <shortName evidence="1">eIF3e</shortName>
    </recommendedName>
    <alternativeName>
        <fullName evidence="1">Eukaryotic translation initiation factor 3 subunit 6</fullName>
    </alternativeName>
</protein>
<gene>
    <name type="primary">eif3E</name>
    <name type="synonym">eif3s6</name>
    <name type="ORF">DDB_G0293052</name>
</gene>
<evidence type="ECO:0000255" key="1">
    <source>
        <dbReference type="HAMAP-Rule" id="MF_03004"/>
    </source>
</evidence>
<evidence type="ECO:0000255" key="2">
    <source>
        <dbReference type="PROSITE-ProRule" id="PRU01185"/>
    </source>
</evidence>
<evidence type="ECO:0000256" key="3">
    <source>
        <dbReference type="SAM" id="MobiDB-lite"/>
    </source>
</evidence>
<dbReference type="EMBL" id="AAFI02000199">
    <property type="protein sequence ID" value="EAL60878.1"/>
    <property type="molecule type" value="Genomic_DNA"/>
</dbReference>
<dbReference type="RefSeq" id="XP_629294.1">
    <property type="nucleotide sequence ID" value="XM_629292.1"/>
</dbReference>
<dbReference type="SMR" id="Q54CC5"/>
<dbReference type="FunCoup" id="Q54CC5">
    <property type="interactions" value="1410"/>
</dbReference>
<dbReference type="STRING" id="44689.Q54CC5"/>
<dbReference type="PaxDb" id="44689-DDB0233925"/>
<dbReference type="EnsemblProtists" id="EAL60878">
    <property type="protein sequence ID" value="EAL60878"/>
    <property type="gene ID" value="DDB_G0293052"/>
</dbReference>
<dbReference type="GeneID" id="8629017"/>
<dbReference type="KEGG" id="ddi:DDB_G0293052"/>
<dbReference type="dictyBase" id="DDB_G0293052">
    <property type="gene designation" value="eif3E"/>
</dbReference>
<dbReference type="VEuPathDB" id="AmoebaDB:DDB_G0293052"/>
<dbReference type="eggNOG" id="KOG2758">
    <property type="taxonomic scope" value="Eukaryota"/>
</dbReference>
<dbReference type="HOGENOM" id="CLU_031132_0_0_1"/>
<dbReference type="InParanoid" id="Q54CC5"/>
<dbReference type="OMA" id="HERFQIG"/>
<dbReference type="PhylomeDB" id="Q54CC5"/>
<dbReference type="Reactome" id="R-DDI-156827">
    <property type="pathway name" value="L13a-mediated translational silencing of Ceruloplasmin expression"/>
</dbReference>
<dbReference type="Reactome" id="R-DDI-72689">
    <property type="pathway name" value="Formation of a pool of free 40S subunits"/>
</dbReference>
<dbReference type="Reactome" id="R-DDI-72695">
    <property type="pathway name" value="Formation of the ternary complex, and subsequently, the 43S complex"/>
</dbReference>
<dbReference type="Reactome" id="R-DDI-72702">
    <property type="pathway name" value="Ribosomal scanning and start codon recognition"/>
</dbReference>
<dbReference type="PRO" id="PR:Q54CC5"/>
<dbReference type="Proteomes" id="UP000002195">
    <property type="component" value="Chromosome 6"/>
</dbReference>
<dbReference type="GO" id="GO:0016282">
    <property type="term" value="C:eukaryotic 43S preinitiation complex"/>
    <property type="evidence" value="ECO:0007669"/>
    <property type="project" value="UniProtKB-UniRule"/>
</dbReference>
<dbReference type="GO" id="GO:0033290">
    <property type="term" value="C:eukaryotic 48S preinitiation complex"/>
    <property type="evidence" value="ECO:0007669"/>
    <property type="project" value="UniProtKB-UniRule"/>
</dbReference>
<dbReference type="GO" id="GO:0005852">
    <property type="term" value="C:eukaryotic translation initiation factor 3 complex"/>
    <property type="evidence" value="ECO:0000318"/>
    <property type="project" value="GO_Central"/>
</dbReference>
<dbReference type="GO" id="GO:0071540">
    <property type="term" value="C:eukaryotic translation initiation factor 3 complex, eIF3e"/>
    <property type="evidence" value="ECO:0007669"/>
    <property type="project" value="UniProtKB-UniRule"/>
</dbReference>
<dbReference type="GO" id="GO:0005634">
    <property type="term" value="C:nucleus"/>
    <property type="evidence" value="ECO:0000318"/>
    <property type="project" value="GO_Central"/>
</dbReference>
<dbReference type="GO" id="GO:0003743">
    <property type="term" value="F:translation initiation factor activity"/>
    <property type="evidence" value="ECO:0007669"/>
    <property type="project" value="UniProtKB-UniRule"/>
</dbReference>
<dbReference type="GO" id="GO:0001732">
    <property type="term" value="P:formation of cytoplasmic translation initiation complex"/>
    <property type="evidence" value="ECO:0007669"/>
    <property type="project" value="UniProtKB-UniRule"/>
</dbReference>
<dbReference type="GO" id="GO:0006413">
    <property type="term" value="P:translational initiation"/>
    <property type="evidence" value="ECO:0000318"/>
    <property type="project" value="GO_Central"/>
</dbReference>
<dbReference type="CDD" id="cd21378">
    <property type="entry name" value="eIF3E"/>
    <property type="match status" value="1"/>
</dbReference>
<dbReference type="HAMAP" id="MF_03004">
    <property type="entry name" value="eIF3e"/>
    <property type="match status" value="1"/>
</dbReference>
<dbReference type="InterPro" id="IPR016650">
    <property type="entry name" value="eIF3e"/>
</dbReference>
<dbReference type="InterPro" id="IPR019010">
    <property type="entry name" value="eIF3e_N"/>
</dbReference>
<dbReference type="InterPro" id="IPR000717">
    <property type="entry name" value="PCI_dom"/>
</dbReference>
<dbReference type="InterPro" id="IPR036390">
    <property type="entry name" value="WH_DNA-bd_sf"/>
</dbReference>
<dbReference type="PANTHER" id="PTHR10317">
    <property type="entry name" value="EUKARYOTIC TRANSLATION INITIATION FACTOR 3 SUBUNIT E"/>
    <property type="match status" value="1"/>
</dbReference>
<dbReference type="Pfam" id="PF09440">
    <property type="entry name" value="eIF3_N"/>
    <property type="match status" value="1"/>
</dbReference>
<dbReference type="Pfam" id="PF01399">
    <property type="entry name" value="PCI"/>
    <property type="match status" value="1"/>
</dbReference>
<dbReference type="PIRSF" id="PIRSF016255">
    <property type="entry name" value="eIF3e_su6"/>
    <property type="match status" value="1"/>
</dbReference>
<dbReference type="SMART" id="SM01186">
    <property type="entry name" value="eIF3_N"/>
    <property type="match status" value="1"/>
</dbReference>
<dbReference type="SMART" id="SM00088">
    <property type="entry name" value="PINT"/>
    <property type="match status" value="1"/>
</dbReference>
<dbReference type="SUPFAM" id="SSF46785">
    <property type="entry name" value="Winged helix' DNA-binding domain"/>
    <property type="match status" value="1"/>
</dbReference>
<dbReference type="PROSITE" id="PS50250">
    <property type="entry name" value="PCI"/>
    <property type="match status" value="1"/>
</dbReference>
<name>EIF3E_DICDI</name>
<feature type="chain" id="PRO_0000330331" description="Eukaryotic translation initiation factor 3 subunit E">
    <location>
        <begin position="1"/>
        <end position="525"/>
    </location>
</feature>
<feature type="domain" description="PCI" evidence="2">
    <location>
        <begin position="261"/>
        <end position="440"/>
    </location>
</feature>
<feature type="region of interest" description="Disordered" evidence="3">
    <location>
        <begin position="102"/>
        <end position="143"/>
    </location>
</feature>
<feature type="region of interest" description="Disordered" evidence="3">
    <location>
        <begin position="463"/>
        <end position="525"/>
    </location>
</feature>
<feature type="compositionally biased region" description="Basic and acidic residues" evidence="3">
    <location>
        <begin position="102"/>
        <end position="120"/>
    </location>
</feature>
<feature type="compositionally biased region" description="Low complexity" evidence="3">
    <location>
        <begin position="121"/>
        <end position="143"/>
    </location>
</feature>
<feature type="compositionally biased region" description="Low complexity" evidence="3">
    <location>
        <begin position="482"/>
        <end position="525"/>
    </location>
</feature>
<reference key="1">
    <citation type="journal article" date="2005" name="Nature">
        <title>The genome of the social amoeba Dictyostelium discoideum.</title>
        <authorList>
            <person name="Eichinger L."/>
            <person name="Pachebat J.A."/>
            <person name="Gloeckner G."/>
            <person name="Rajandream M.A."/>
            <person name="Sucgang R."/>
            <person name="Berriman M."/>
            <person name="Song J."/>
            <person name="Olsen R."/>
            <person name="Szafranski K."/>
            <person name="Xu Q."/>
            <person name="Tunggal B."/>
            <person name="Kummerfeld S."/>
            <person name="Madera M."/>
            <person name="Konfortov B.A."/>
            <person name="Rivero F."/>
            <person name="Bankier A.T."/>
            <person name="Lehmann R."/>
            <person name="Hamlin N."/>
            <person name="Davies R."/>
            <person name="Gaudet P."/>
            <person name="Fey P."/>
            <person name="Pilcher K."/>
            <person name="Chen G."/>
            <person name="Saunders D."/>
            <person name="Sodergren E.J."/>
            <person name="Davis P."/>
            <person name="Kerhornou A."/>
            <person name="Nie X."/>
            <person name="Hall N."/>
            <person name="Anjard C."/>
            <person name="Hemphill L."/>
            <person name="Bason N."/>
            <person name="Farbrother P."/>
            <person name="Desany B."/>
            <person name="Just E."/>
            <person name="Morio T."/>
            <person name="Rost R."/>
            <person name="Churcher C.M."/>
            <person name="Cooper J."/>
            <person name="Haydock S."/>
            <person name="van Driessche N."/>
            <person name="Cronin A."/>
            <person name="Goodhead I."/>
            <person name="Muzny D.M."/>
            <person name="Mourier T."/>
            <person name="Pain A."/>
            <person name="Lu M."/>
            <person name="Harper D."/>
            <person name="Lindsay R."/>
            <person name="Hauser H."/>
            <person name="James K.D."/>
            <person name="Quiles M."/>
            <person name="Madan Babu M."/>
            <person name="Saito T."/>
            <person name="Buchrieser C."/>
            <person name="Wardroper A."/>
            <person name="Felder M."/>
            <person name="Thangavelu M."/>
            <person name="Johnson D."/>
            <person name="Knights A."/>
            <person name="Loulseged H."/>
            <person name="Mungall K.L."/>
            <person name="Oliver K."/>
            <person name="Price C."/>
            <person name="Quail M.A."/>
            <person name="Urushihara H."/>
            <person name="Hernandez J."/>
            <person name="Rabbinowitsch E."/>
            <person name="Steffen D."/>
            <person name="Sanders M."/>
            <person name="Ma J."/>
            <person name="Kohara Y."/>
            <person name="Sharp S."/>
            <person name="Simmonds M.N."/>
            <person name="Spiegler S."/>
            <person name="Tivey A."/>
            <person name="Sugano S."/>
            <person name="White B."/>
            <person name="Walker D."/>
            <person name="Woodward J.R."/>
            <person name="Winckler T."/>
            <person name="Tanaka Y."/>
            <person name="Shaulsky G."/>
            <person name="Schleicher M."/>
            <person name="Weinstock G.M."/>
            <person name="Rosenthal A."/>
            <person name="Cox E.C."/>
            <person name="Chisholm R.L."/>
            <person name="Gibbs R.A."/>
            <person name="Loomis W.F."/>
            <person name="Platzer M."/>
            <person name="Kay R.R."/>
            <person name="Williams J.G."/>
            <person name="Dear P.H."/>
            <person name="Noegel A.A."/>
            <person name="Barrell B.G."/>
            <person name="Kuspa A."/>
        </authorList>
    </citation>
    <scope>NUCLEOTIDE SEQUENCE [LARGE SCALE GENOMIC DNA]</scope>
    <source>
        <strain>AX4</strain>
    </source>
</reference>
<sequence length="525" mass="60041">MEYDLTKQICSFLDAHMMLPLINYLKDTQQYQENEINKAMADILSQTGCCDYAINAYESIGRDTAPLQAKKQELVGELNKLKEQCSFVTQYIESKKQQKEQQKELKEQQKEQQKEKDTDKTTPTTTDETTTTTTTAPTTTTTTTTTTITPITVIPFSQLLEKITPEILDSIYRFSKLLFEIGQYGSAREHLEIFLQLSPTHQNKDKRLSALWGILESDILSLNWGQAVGDISPLQDQIDSNGTPVEQLGQRAWLIHRALFVYFYNPESRSSLVDLLLEDKYLNAIQTTCPHILRYLAVAIIVNKKKQQSNVFQRILNALVRVVEQEAYVYRDPITQFISSLFVKFNFEDAQAQLILCEKVLKNDFFLNTCVDEFMENARVCVFETYCNILESIDIDMLCKNLRIDPESSEKWIVEAIRNTRFSAKIDSANNQIKMFTQHNSYRQVMDKTKALFNRGIEMVVGINESRSQQNRKGGDNRKNQRGQNRNQQNQQNQQSNESNETTTTTTTAAAATTTTTTTATPTSA</sequence>
<accession>Q54CC5</accession>
<organism>
    <name type="scientific">Dictyostelium discoideum</name>
    <name type="common">Social amoeba</name>
    <dbReference type="NCBI Taxonomy" id="44689"/>
    <lineage>
        <taxon>Eukaryota</taxon>
        <taxon>Amoebozoa</taxon>
        <taxon>Evosea</taxon>
        <taxon>Eumycetozoa</taxon>
        <taxon>Dictyostelia</taxon>
        <taxon>Dictyosteliales</taxon>
        <taxon>Dictyosteliaceae</taxon>
        <taxon>Dictyostelium</taxon>
    </lineage>
</organism>
<comment type="function">
    <text evidence="1">Component of the eukaryotic translation initiation factor 3 (eIF-3) complex, which is involved in protein synthesis of a specialized repertoire of mRNAs and, together with other initiation factors, stimulates binding of mRNA and methionyl-tRNAi to the 40S ribosome. The eIF-3 complex specifically targets and initiates translation of a subset of mRNAs involved in cell proliferation.</text>
</comment>
<comment type="subunit">
    <text evidence="1">Component of the eukaryotic translation initiation factor 3 (eIF-3) complex.</text>
</comment>
<comment type="subcellular location">
    <subcellularLocation>
        <location evidence="1">Cytoplasm</location>
    </subcellularLocation>
</comment>
<comment type="similarity">
    <text evidence="1">Belongs to the eIF-3 subunit E family.</text>
</comment>
<keyword id="KW-0963">Cytoplasm</keyword>
<keyword id="KW-0396">Initiation factor</keyword>
<keyword id="KW-0648">Protein biosynthesis</keyword>
<keyword id="KW-1185">Reference proteome</keyword>
<proteinExistence type="inferred from homology"/>